<name>EFG_FRATM</name>
<accession>B2SDY7</accession>
<keyword id="KW-0963">Cytoplasm</keyword>
<keyword id="KW-0251">Elongation factor</keyword>
<keyword id="KW-0342">GTP-binding</keyword>
<keyword id="KW-0547">Nucleotide-binding</keyword>
<keyword id="KW-0648">Protein biosynthesis</keyword>
<dbReference type="EMBL" id="CP000915">
    <property type="protein sequence ID" value="ACD31351.1"/>
    <property type="molecule type" value="Genomic_DNA"/>
</dbReference>
<dbReference type="SMR" id="B2SDY7"/>
<dbReference type="KEGG" id="ftm:FTM_1529"/>
<dbReference type="HOGENOM" id="CLU_002794_4_1_6"/>
<dbReference type="GO" id="GO:0005737">
    <property type="term" value="C:cytoplasm"/>
    <property type="evidence" value="ECO:0007669"/>
    <property type="project" value="UniProtKB-SubCell"/>
</dbReference>
<dbReference type="GO" id="GO:0005525">
    <property type="term" value="F:GTP binding"/>
    <property type="evidence" value="ECO:0007669"/>
    <property type="project" value="UniProtKB-UniRule"/>
</dbReference>
<dbReference type="GO" id="GO:0003924">
    <property type="term" value="F:GTPase activity"/>
    <property type="evidence" value="ECO:0007669"/>
    <property type="project" value="InterPro"/>
</dbReference>
<dbReference type="GO" id="GO:0097216">
    <property type="term" value="F:guanosine tetraphosphate binding"/>
    <property type="evidence" value="ECO:0007669"/>
    <property type="project" value="UniProtKB-ARBA"/>
</dbReference>
<dbReference type="GO" id="GO:0003746">
    <property type="term" value="F:translation elongation factor activity"/>
    <property type="evidence" value="ECO:0007669"/>
    <property type="project" value="UniProtKB-UniRule"/>
</dbReference>
<dbReference type="GO" id="GO:0032790">
    <property type="term" value="P:ribosome disassembly"/>
    <property type="evidence" value="ECO:0007669"/>
    <property type="project" value="TreeGrafter"/>
</dbReference>
<dbReference type="CDD" id="cd01886">
    <property type="entry name" value="EF-G"/>
    <property type="match status" value="1"/>
</dbReference>
<dbReference type="CDD" id="cd16262">
    <property type="entry name" value="EFG_III"/>
    <property type="match status" value="1"/>
</dbReference>
<dbReference type="CDD" id="cd01434">
    <property type="entry name" value="EFG_mtEFG1_IV"/>
    <property type="match status" value="1"/>
</dbReference>
<dbReference type="CDD" id="cd03713">
    <property type="entry name" value="EFG_mtEFG_C"/>
    <property type="match status" value="1"/>
</dbReference>
<dbReference type="CDD" id="cd04088">
    <property type="entry name" value="EFG_mtEFG_II"/>
    <property type="match status" value="1"/>
</dbReference>
<dbReference type="FunFam" id="2.40.30.10:FF:000006">
    <property type="entry name" value="Elongation factor G"/>
    <property type="match status" value="1"/>
</dbReference>
<dbReference type="FunFam" id="3.30.230.10:FF:000003">
    <property type="entry name" value="Elongation factor G"/>
    <property type="match status" value="1"/>
</dbReference>
<dbReference type="FunFam" id="3.30.70.240:FF:000001">
    <property type="entry name" value="Elongation factor G"/>
    <property type="match status" value="1"/>
</dbReference>
<dbReference type="FunFam" id="3.30.70.870:FF:000001">
    <property type="entry name" value="Elongation factor G"/>
    <property type="match status" value="1"/>
</dbReference>
<dbReference type="FunFam" id="3.40.50.300:FF:000029">
    <property type="entry name" value="Elongation factor G"/>
    <property type="match status" value="1"/>
</dbReference>
<dbReference type="Gene3D" id="3.30.230.10">
    <property type="match status" value="1"/>
</dbReference>
<dbReference type="Gene3D" id="3.30.70.240">
    <property type="match status" value="1"/>
</dbReference>
<dbReference type="Gene3D" id="3.30.70.870">
    <property type="entry name" value="Elongation Factor G (Translational Gtpase), domain 3"/>
    <property type="match status" value="1"/>
</dbReference>
<dbReference type="Gene3D" id="3.40.50.300">
    <property type="entry name" value="P-loop containing nucleotide triphosphate hydrolases"/>
    <property type="match status" value="1"/>
</dbReference>
<dbReference type="Gene3D" id="2.40.30.10">
    <property type="entry name" value="Translation factors"/>
    <property type="match status" value="1"/>
</dbReference>
<dbReference type="HAMAP" id="MF_00054_B">
    <property type="entry name" value="EF_G_EF_2_B"/>
    <property type="match status" value="1"/>
</dbReference>
<dbReference type="InterPro" id="IPR041095">
    <property type="entry name" value="EFG_II"/>
</dbReference>
<dbReference type="InterPro" id="IPR009022">
    <property type="entry name" value="EFG_III"/>
</dbReference>
<dbReference type="InterPro" id="IPR035647">
    <property type="entry name" value="EFG_III/V"/>
</dbReference>
<dbReference type="InterPro" id="IPR047872">
    <property type="entry name" value="EFG_IV"/>
</dbReference>
<dbReference type="InterPro" id="IPR035649">
    <property type="entry name" value="EFG_V"/>
</dbReference>
<dbReference type="InterPro" id="IPR000640">
    <property type="entry name" value="EFG_V-like"/>
</dbReference>
<dbReference type="InterPro" id="IPR004161">
    <property type="entry name" value="EFTu-like_2"/>
</dbReference>
<dbReference type="InterPro" id="IPR031157">
    <property type="entry name" value="G_TR_CS"/>
</dbReference>
<dbReference type="InterPro" id="IPR027417">
    <property type="entry name" value="P-loop_NTPase"/>
</dbReference>
<dbReference type="InterPro" id="IPR020568">
    <property type="entry name" value="Ribosomal_Su5_D2-typ_SF"/>
</dbReference>
<dbReference type="InterPro" id="IPR014721">
    <property type="entry name" value="Ribsml_uS5_D2-typ_fold_subgr"/>
</dbReference>
<dbReference type="InterPro" id="IPR005225">
    <property type="entry name" value="Small_GTP-bd"/>
</dbReference>
<dbReference type="InterPro" id="IPR000795">
    <property type="entry name" value="T_Tr_GTP-bd_dom"/>
</dbReference>
<dbReference type="InterPro" id="IPR009000">
    <property type="entry name" value="Transl_B-barrel_sf"/>
</dbReference>
<dbReference type="InterPro" id="IPR004540">
    <property type="entry name" value="Transl_elong_EFG/EF2"/>
</dbReference>
<dbReference type="InterPro" id="IPR005517">
    <property type="entry name" value="Transl_elong_EFG/EF2_IV"/>
</dbReference>
<dbReference type="NCBIfam" id="TIGR00484">
    <property type="entry name" value="EF-G"/>
    <property type="match status" value="1"/>
</dbReference>
<dbReference type="NCBIfam" id="NF009381">
    <property type="entry name" value="PRK12740.1-5"/>
    <property type="match status" value="1"/>
</dbReference>
<dbReference type="NCBIfam" id="TIGR00231">
    <property type="entry name" value="small_GTP"/>
    <property type="match status" value="1"/>
</dbReference>
<dbReference type="PANTHER" id="PTHR43261:SF1">
    <property type="entry name" value="RIBOSOME-RELEASING FACTOR 2, MITOCHONDRIAL"/>
    <property type="match status" value="1"/>
</dbReference>
<dbReference type="PANTHER" id="PTHR43261">
    <property type="entry name" value="TRANSLATION ELONGATION FACTOR G-RELATED"/>
    <property type="match status" value="1"/>
</dbReference>
<dbReference type="Pfam" id="PF00679">
    <property type="entry name" value="EFG_C"/>
    <property type="match status" value="1"/>
</dbReference>
<dbReference type="Pfam" id="PF14492">
    <property type="entry name" value="EFG_III"/>
    <property type="match status" value="1"/>
</dbReference>
<dbReference type="Pfam" id="PF03764">
    <property type="entry name" value="EFG_IV"/>
    <property type="match status" value="1"/>
</dbReference>
<dbReference type="Pfam" id="PF00009">
    <property type="entry name" value="GTP_EFTU"/>
    <property type="match status" value="1"/>
</dbReference>
<dbReference type="Pfam" id="PF03144">
    <property type="entry name" value="GTP_EFTU_D2"/>
    <property type="match status" value="1"/>
</dbReference>
<dbReference type="PRINTS" id="PR00315">
    <property type="entry name" value="ELONGATNFCT"/>
</dbReference>
<dbReference type="SMART" id="SM00838">
    <property type="entry name" value="EFG_C"/>
    <property type="match status" value="1"/>
</dbReference>
<dbReference type="SMART" id="SM00889">
    <property type="entry name" value="EFG_IV"/>
    <property type="match status" value="1"/>
</dbReference>
<dbReference type="SUPFAM" id="SSF54980">
    <property type="entry name" value="EF-G C-terminal domain-like"/>
    <property type="match status" value="2"/>
</dbReference>
<dbReference type="SUPFAM" id="SSF52540">
    <property type="entry name" value="P-loop containing nucleoside triphosphate hydrolases"/>
    <property type="match status" value="1"/>
</dbReference>
<dbReference type="SUPFAM" id="SSF54211">
    <property type="entry name" value="Ribosomal protein S5 domain 2-like"/>
    <property type="match status" value="1"/>
</dbReference>
<dbReference type="SUPFAM" id="SSF50447">
    <property type="entry name" value="Translation proteins"/>
    <property type="match status" value="1"/>
</dbReference>
<dbReference type="PROSITE" id="PS00301">
    <property type="entry name" value="G_TR_1"/>
    <property type="match status" value="1"/>
</dbReference>
<dbReference type="PROSITE" id="PS51722">
    <property type="entry name" value="G_TR_2"/>
    <property type="match status" value="1"/>
</dbReference>
<proteinExistence type="inferred from homology"/>
<reference key="1">
    <citation type="journal article" date="2009" name="PLoS Pathog.">
        <title>Molecular evolutionary consequences of niche restriction in Francisella tularensis, a facultative intracellular pathogen.</title>
        <authorList>
            <person name="Larsson P."/>
            <person name="Elfsmark D."/>
            <person name="Svensson K."/>
            <person name="Wikstroem P."/>
            <person name="Forsman M."/>
            <person name="Brettin T."/>
            <person name="Keim P."/>
            <person name="Johansson A."/>
        </authorList>
    </citation>
    <scope>NUCLEOTIDE SEQUENCE [LARGE SCALE GENOMIC DNA]</scope>
    <source>
        <strain>FSC147</strain>
    </source>
</reference>
<protein>
    <recommendedName>
        <fullName evidence="1">Elongation factor G</fullName>
        <shortName evidence="1">EF-G</shortName>
    </recommendedName>
</protein>
<sequence>MPRNTALEKYRNIGICAHVDAGKTTTTERILFYTGLSHKIGEVHDGAATMDWMEQEQERGITITSAATTTFWSGMDQQFEKHRINIIDTPGHVDFTIEVERSLRVLDGAVVVFCGSSGVEPQSETVWRQANKYGVPRIVFVNKMDRSGADFERVCAQIKTRLKANVVPVQLNIGAEEDFKGVIDLIRMKAIMWNEEDMGLTYELVDIPADLQDRAEELRMEMIEAAAEASEELMEKYLEGGELSEDEIHQGLRARVLNNEIVLAFCGSAFKNKGVQAVLDGVVRYLPAPNQVPAIKCETEDGEPASRPSSDDAPFAALAFKLATDPFVGNLTFIRVYSGVLKSGDAVYNPVKGKKERVGRIVQMHANKRDEIKEVRAGDIAACIGLKDVTTGDTLCDQEDVVILEKMDFPEPVISVAVEPKSKADQEKMSIALGKLAAEDPSFRVKTDEESGQTIISGMGELHLDIIVDRMRREFKVEANVGNPQVAYRETIRSKVEQEAKFVRQSGGRGQYGHVFVRFEPLDEVDENGEAKVFKFVDEVVGGVVPKEYIGSVAKGIEEQLNNGVLAGYPMIGVKATLYDGSYHDVDSSEMAFKIAGSMALKEGAKKANACILEPIMKVEVVTPEDYLGDVMGDLNRRRGIIEGMDENPSGRVINALVPLAEMFGYATNVRSISQGRASFSMEFKKYAEVPNNIADEIIKSHNS</sequence>
<feature type="chain" id="PRO_1000091714" description="Elongation factor G">
    <location>
        <begin position="1"/>
        <end position="704"/>
    </location>
</feature>
<feature type="domain" description="tr-type G">
    <location>
        <begin position="8"/>
        <end position="290"/>
    </location>
</feature>
<feature type="binding site" evidence="1">
    <location>
        <begin position="17"/>
        <end position="24"/>
    </location>
    <ligand>
        <name>GTP</name>
        <dbReference type="ChEBI" id="CHEBI:37565"/>
    </ligand>
</feature>
<feature type="binding site" evidence="1">
    <location>
        <begin position="88"/>
        <end position="92"/>
    </location>
    <ligand>
        <name>GTP</name>
        <dbReference type="ChEBI" id="CHEBI:37565"/>
    </ligand>
</feature>
<feature type="binding site" evidence="1">
    <location>
        <begin position="142"/>
        <end position="145"/>
    </location>
    <ligand>
        <name>GTP</name>
        <dbReference type="ChEBI" id="CHEBI:37565"/>
    </ligand>
</feature>
<organism>
    <name type="scientific">Francisella tularensis subsp. mediasiatica (strain FSC147)</name>
    <dbReference type="NCBI Taxonomy" id="441952"/>
    <lineage>
        <taxon>Bacteria</taxon>
        <taxon>Pseudomonadati</taxon>
        <taxon>Pseudomonadota</taxon>
        <taxon>Gammaproteobacteria</taxon>
        <taxon>Thiotrichales</taxon>
        <taxon>Francisellaceae</taxon>
        <taxon>Francisella</taxon>
    </lineage>
</organism>
<comment type="function">
    <text evidence="1">Catalyzes the GTP-dependent ribosomal translocation step during translation elongation. During this step, the ribosome changes from the pre-translocational (PRE) to the post-translocational (POST) state as the newly formed A-site-bound peptidyl-tRNA and P-site-bound deacylated tRNA move to the P and E sites, respectively. Catalyzes the coordinated movement of the two tRNA molecules, the mRNA and conformational changes in the ribosome.</text>
</comment>
<comment type="subcellular location">
    <subcellularLocation>
        <location evidence="1">Cytoplasm</location>
    </subcellularLocation>
</comment>
<comment type="similarity">
    <text evidence="1">Belongs to the TRAFAC class translation factor GTPase superfamily. Classic translation factor GTPase family. EF-G/EF-2 subfamily.</text>
</comment>
<evidence type="ECO:0000255" key="1">
    <source>
        <dbReference type="HAMAP-Rule" id="MF_00054"/>
    </source>
</evidence>
<gene>
    <name evidence="1" type="primary">fusA</name>
    <name type="ordered locus">FTM_1529</name>
</gene>